<dbReference type="EMBL" id="CP001029">
    <property type="protein sequence ID" value="ACB79310.1"/>
    <property type="molecule type" value="Genomic_DNA"/>
</dbReference>
<dbReference type="RefSeq" id="WP_012453060.1">
    <property type="nucleotide sequence ID" value="NC_010725.1"/>
</dbReference>
<dbReference type="SMR" id="B1ZBW7"/>
<dbReference type="STRING" id="441620.Mpop_1138"/>
<dbReference type="KEGG" id="mpo:Mpop_1138"/>
<dbReference type="eggNOG" id="COG0829">
    <property type="taxonomic scope" value="Bacteria"/>
</dbReference>
<dbReference type="HOGENOM" id="CLU_056339_1_1_5"/>
<dbReference type="OrthoDB" id="9807968at2"/>
<dbReference type="Proteomes" id="UP000007136">
    <property type="component" value="Chromosome"/>
</dbReference>
<dbReference type="GO" id="GO:0005737">
    <property type="term" value="C:cytoplasm"/>
    <property type="evidence" value="ECO:0007669"/>
    <property type="project" value="UniProtKB-SubCell"/>
</dbReference>
<dbReference type="GO" id="GO:0016151">
    <property type="term" value="F:nickel cation binding"/>
    <property type="evidence" value="ECO:0007669"/>
    <property type="project" value="UniProtKB-UniRule"/>
</dbReference>
<dbReference type="HAMAP" id="MF_01384">
    <property type="entry name" value="UreD"/>
    <property type="match status" value="1"/>
</dbReference>
<dbReference type="InterPro" id="IPR002669">
    <property type="entry name" value="UreD"/>
</dbReference>
<dbReference type="PANTHER" id="PTHR33643">
    <property type="entry name" value="UREASE ACCESSORY PROTEIN D"/>
    <property type="match status" value="1"/>
</dbReference>
<dbReference type="PANTHER" id="PTHR33643:SF1">
    <property type="entry name" value="UREASE ACCESSORY PROTEIN D"/>
    <property type="match status" value="1"/>
</dbReference>
<dbReference type="Pfam" id="PF01774">
    <property type="entry name" value="UreD"/>
    <property type="match status" value="1"/>
</dbReference>
<comment type="function">
    <text evidence="1">Required for maturation of urease via the functional incorporation of the urease nickel metallocenter.</text>
</comment>
<comment type="subunit">
    <text evidence="1">UreD, UreF and UreG form a complex that acts as a GTP-hydrolysis-dependent molecular chaperone, activating the urease apoprotein by helping to assemble the nickel containing metallocenter of UreC. The UreE protein probably delivers the nickel.</text>
</comment>
<comment type="subcellular location">
    <subcellularLocation>
        <location evidence="1">Cytoplasm</location>
    </subcellularLocation>
</comment>
<comment type="similarity">
    <text evidence="1">Belongs to the UreD family.</text>
</comment>
<gene>
    <name evidence="1" type="primary">ureD1</name>
    <name type="ordered locus">Mpop_1138</name>
</gene>
<protein>
    <recommendedName>
        <fullName evidence="1">Urease accessory protein UreD 1</fullName>
    </recommendedName>
</protein>
<sequence>MALSLDDLPEKPAPAEPVSAPVGRRVQASLVFARGGGTTVLSRQVVPYPFHITRAFRMHPESPDLATLYLQSASGGLYAADHLTLDIAARPGARVHVTTQAGTVVHRGGPEPTRQDTRLAIAADAFLALNPDPLILFPGAHLAVSTDITAEPGARAIVTESVACHDPLGQDRPFDRLDLGLTIRTPEGRALVRERSRIDGAAFVGPDSPMGGHRAYGTMVVLGAPEDARLAGPLLRQASDTAGCLTGVSVLPNGAGLGLRLLAPDGGTLSAGMEAVFRIVFEALSGCGPGRRRK</sequence>
<organism>
    <name type="scientific">Methylorubrum populi (strain ATCC BAA-705 / NCIMB 13946 / BJ001)</name>
    <name type="common">Methylobacterium populi</name>
    <dbReference type="NCBI Taxonomy" id="441620"/>
    <lineage>
        <taxon>Bacteria</taxon>
        <taxon>Pseudomonadati</taxon>
        <taxon>Pseudomonadota</taxon>
        <taxon>Alphaproteobacteria</taxon>
        <taxon>Hyphomicrobiales</taxon>
        <taxon>Methylobacteriaceae</taxon>
        <taxon>Methylorubrum</taxon>
    </lineage>
</organism>
<keyword id="KW-0143">Chaperone</keyword>
<keyword id="KW-0963">Cytoplasm</keyword>
<keyword id="KW-0996">Nickel insertion</keyword>
<reference key="1">
    <citation type="submission" date="2008-04" db="EMBL/GenBank/DDBJ databases">
        <title>Complete sequence of chromosome of Methylobacterium populi BJ001.</title>
        <authorList>
            <consortium name="US DOE Joint Genome Institute"/>
            <person name="Copeland A."/>
            <person name="Lucas S."/>
            <person name="Lapidus A."/>
            <person name="Glavina del Rio T."/>
            <person name="Dalin E."/>
            <person name="Tice H."/>
            <person name="Bruce D."/>
            <person name="Goodwin L."/>
            <person name="Pitluck S."/>
            <person name="Chertkov O."/>
            <person name="Brettin T."/>
            <person name="Detter J.C."/>
            <person name="Han C."/>
            <person name="Kuske C.R."/>
            <person name="Schmutz J."/>
            <person name="Larimer F."/>
            <person name="Land M."/>
            <person name="Hauser L."/>
            <person name="Kyrpides N."/>
            <person name="Mikhailova N."/>
            <person name="Marx C."/>
            <person name="Richardson P."/>
        </authorList>
    </citation>
    <scope>NUCLEOTIDE SEQUENCE [LARGE SCALE GENOMIC DNA]</scope>
    <source>
        <strain>ATCC BAA-705 / NCIMB 13946 / BJ001</strain>
    </source>
</reference>
<feature type="chain" id="PRO_0000346575" description="Urease accessory protein UreD 1">
    <location>
        <begin position="1"/>
        <end position="294"/>
    </location>
</feature>
<feature type="region of interest" description="Disordered" evidence="2">
    <location>
        <begin position="1"/>
        <end position="20"/>
    </location>
</feature>
<proteinExistence type="inferred from homology"/>
<evidence type="ECO:0000255" key="1">
    <source>
        <dbReference type="HAMAP-Rule" id="MF_01384"/>
    </source>
</evidence>
<evidence type="ECO:0000256" key="2">
    <source>
        <dbReference type="SAM" id="MobiDB-lite"/>
    </source>
</evidence>
<accession>B1ZBW7</accession>
<name>URED1_METPB</name>